<protein>
    <recommendedName>
        <fullName evidence="1">NADH-quinone oxidoreductase subunit D</fullName>
        <ecNumber evidence="1">7.1.1.-</ecNumber>
    </recommendedName>
    <alternativeName>
        <fullName evidence="1">NADH dehydrogenase I subunit D</fullName>
    </alternativeName>
    <alternativeName>
        <fullName evidence="1">NDH-1 subunit D</fullName>
    </alternativeName>
</protein>
<keyword id="KW-0997">Cell inner membrane</keyword>
<keyword id="KW-1003">Cell membrane</keyword>
<keyword id="KW-0472">Membrane</keyword>
<keyword id="KW-0520">NAD</keyword>
<keyword id="KW-0874">Quinone</keyword>
<keyword id="KW-1278">Translocase</keyword>
<keyword id="KW-0813">Transport</keyword>
<keyword id="KW-0830">Ubiquinone</keyword>
<comment type="function">
    <text evidence="1">NDH-1 shuttles electrons from NADH, via FMN and iron-sulfur (Fe-S) centers, to quinones in the respiratory chain. The immediate electron acceptor for the enzyme in this species is believed to be ubiquinone. Couples the redox reaction to proton translocation (for every two electrons transferred, four hydrogen ions are translocated across the cytoplasmic membrane), and thus conserves the redox energy in a proton gradient.</text>
</comment>
<comment type="catalytic activity">
    <reaction evidence="1">
        <text>a quinone + NADH + 5 H(+)(in) = a quinol + NAD(+) + 4 H(+)(out)</text>
        <dbReference type="Rhea" id="RHEA:57888"/>
        <dbReference type="ChEBI" id="CHEBI:15378"/>
        <dbReference type="ChEBI" id="CHEBI:24646"/>
        <dbReference type="ChEBI" id="CHEBI:57540"/>
        <dbReference type="ChEBI" id="CHEBI:57945"/>
        <dbReference type="ChEBI" id="CHEBI:132124"/>
    </reaction>
</comment>
<comment type="subunit">
    <text evidence="1">NDH-1 is composed of 14 different subunits. Subunits NuoB, C, D, E, F, and G constitute the peripheral sector of the complex.</text>
</comment>
<comment type="subcellular location">
    <subcellularLocation>
        <location evidence="1">Cell inner membrane</location>
        <topology evidence="1">Peripheral membrane protein</topology>
        <orientation evidence="1">Cytoplasmic side</orientation>
    </subcellularLocation>
</comment>
<comment type="similarity">
    <text evidence="1">Belongs to the complex I 49 kDa subunit family.</text>
</comment>
<proteinExistence type="inferred from homology"/>
<dbReference type="EC" id="7.1.1.-" evidence="1"/>
<dbReference type="EMBL" id="CP000908">
    <property type="protein sequence ID" value="ABY29486.1"/>
    <property type="molecule type" value="Genomic_DNA"/>
</dbReference>
<dbReference type="RefSeq" id="WP_003598196.1">
    <property type="nucleotide sequence ID" value="NC_010172.1"/>
</dbReference>
<dbReference type="SMR" id="A9W1N0"/>
<dbReference type="KEGG" id="mex:Mext_1082"/>
<dbReference type="eggNOG" id="COG0649">
    <property type="taxonomic scope" value="Bacteria"/>
</dbReference>
<dbReference type="HOGENOM" id="CLU_015134_1_1_5"/>
<dbReference type="BioCyc" id="MEXT419610:MEXT_RS05430-MONOMER"/>
<dbReference type="GO" id="GO:0005886">
    <property type="term" value="C:plasma membrane"/>
    <property type="evidence" value="ECO:0007669"/>
    <property type="project" value="UniProtKB-SubCell"/>
</dbReference>
<dbReference type="GO" id="GO:0051287">
    <property type="term" value="F:NAD binding"/>
    <property type="evidence" value="ECO:0007669"/>
    <property type="project" value="InterPro"/>
</dbReference>
<dbReference type="GO" id="GO:0050136">
    <property type="term" value="F:NADH:ubiquinone reductase (non-electrogenic) activity"/>
    <property type="evidence" value="ECO:0007669"/>
    <property type="project" value="UniProtKB-UniRule"/>
</dbReference>
<dbReference type="GO" id="GO:0048038">
    <property type="term" value="F:quinone binding"/>
    <property type="evidence" value="ECO:0007669"/>
    <property type="project" value="UniProtKB-KW"/>
</dbReference>
<dbReference type="FunFam" id="1.10.645.10:FF:000005">
    <property type="entry name" value="NADH-quinone oxidoreductase subunit D"/>
    <property type="match status" value="1"/>
</dbReference>
<dbReference type="Gene3D" id="1.10.645.10">
    <property type="entry name" value="Cytochrome-c3 Hydrogenase, chain B"/>
    <property type="match status" value="1"/>
</dbReference>
<dbReference type="HAMAP" id="MF_01358">
    <property type="entry name" value="NDH1_NuoD"/>
    <property type="match status" value="1"/>
</dbReference>
<dbReference type="InterPro" id="IPR001135">
    <property type="entry name" value="NADH_Q_OxRdtase_suD"/>
</dbReference>
<dbReference type="InterPro" id="IPR014029">
    <property type="entry name" value="NADH_UbQ_OxRdtase_49kDa_CS"/>
</dbReference>
<dbReference type="InterPro" id="IPR022885">
    <property type="entry name" value="NDH1_su_D/H"/>
</dbReference>
<dbReference type="InterPro" id="IPR029014">
    <property type="entry name" value="NiFe-Hase_large"/>
</dbReference>
<dbReference type="NCBIfam" id="TIGR01962">
    <property type="entry name" value="NuoD"/>
    <property type="match status" value="1"/>
</dbReference>
<dbReference type="NCBIfam" id="NF004739">
    <property type="entry name" value="PRK06075.1"/>
    <property type="match status" value="1"/>
</dbReference>
<dbReference type="PANTHER" id="PTHR11993:SF10">
    <property type="entry name" value="NADH DEHYDROGENASE [UBIQUINONE] IRON-SULFUR PROTEIN 2, MITOCHONDRIAL"/>
    <property type="match status" value="1"/>
</dbReference>
<dbReference type="PANTHER" id="PTHR11993">
    <property type="entry name" value="NADH-UBIQUINONE OXIDOREDUCTASE 49 KDA SUBUNIT"/>
    <property type="match status" value="1"/>
</dbReference>
<dbReference type="Pfam" id="PF00346">
    <property type="entry name" value="Complex1_49kDa"/>
    <property type="match status" value="1"/>
</dbReference>
<dbReference type="SUPFAM" id="SSF56762">
    <property type="entry name" value="HydB/Nqo4-like"/>
    <property type="match status" value="1"/>
</dbReference>
<dbReference type="PROSITE" id="PS00535">
    <property type="entry name" value="COMPLEX1_49K"/>
    <property type="match status" value="1"/>
</dbReference>
<feature type="chain" id="PRO_0000357848" description="NADH-quinone oxidoreductase subunit D">
    <location>
        <begin position="1"/>
        <end position="396"/>
    </location>
</feature>
<reference key="1">
    <citation type="submission" date="2007-12" db="EMBL/GenBank/DDBJ databases">
        <title>Complete sequence of Methylobacterium extorquens PA1.</title>
        <authorList>
            <consortium name="US DOE Joint Genome Institute"/>
            <person name="Copeland A."/>
            <person name="Lucas S."/>
            <person name="Lapidus A."/>
            <person name="Barry K."/>
            <person name="Glavina del Rio T."/>
            <person name="Dalin E."/>
            <person name="Tice H."/>
            <person name="Pitluck S."/>
            <person name="Saunders E."/>
            <person name="Brettin T."/>
            <person name="Bruce D."/>
            <person name="Detter J.C."/>
            <person name="Han C."/>
            <person name="Schmutz J."/>
            <person name="Larimer F."/>
            <person name="Land M."/>
            <person name="Hauser L."/>
            <person name="Kyrpides N."/>
            <person name="Kim E."/>
            <person name="Marx C."/>
            <person name="Richardson P."/>
        </authorList>
    </citation>
    <scope>NUCLEOTIDE SEQUENCE [LARGE SCALE GENOMIC DNA]</scope>
    <source>
        <strain>PA1</strain>
    </source>
</reference>
<organism>
    <name type="scientific">Methylorubrum extorquens (strain PA1)</name>
    <name type="common">Methylobacterium extorquens</name>
    <dbReference type="NCBI Taxonomy" id="419610"/>
    <lineage>
        <taxon>Bacteria</taxon>
        <taxon>Pseudomonadati</taxon>
        <taxon>Pseudomonadota</taxon>
        <taxon>Alphaproteobacteria</taxon>
        <taxon>Hyphomicrobiales</taxon>
        <taxon>Methylobacteriaceae</taxon>
        <taxon>Methylorubrum</taxon>
    </lineage>
</organism>
<sequence>MTEHNIRNFSINFGPQHPAAHGVLRLVLELDGEVVERVDPHIGLLHRGTEKLIEHKTYLQATPYFDRLDYVAPMNQEHAFCLAIERLAGIEVPRRAQLIRTLFCEIGRLLSHLLNVTTQAMDVGALTPPLWGFEEREKLMIFYERASGARLHANYFRPGGVHQDLPPALIDDIEAFCDPFLKVVDDLDNLVMANRIFKQRNVDIGIVSVDEAMAWGFSGVMVRGSGIPWDLRKSQPYELYEEMEFDIPVGKNGDTYDRQVIRMEEMRESVKIMRQCVAKLREPAGQGPIASIDGKFAPPPRREMKRSMEALIHHFKLYTEGFHVPEGEVYAAVEAPKGEFGVYLVSDGTNKPYRCKIRAPGFAHLQAMDWMCRGHLLADVSCVLGTLDIVFGEVDR</sequence>
<accession>A9W1N0</accession>
<name>NUOD_METEP</name>
<evidence type="ECO:0000255" key="1">
    <source>
        <dbReference type="HAMAP-Rule" id="MF_01358"/>
    </source>
</evidence>
<gene>
    <name evidence="1" type="primary">nuoD</name>
    <name type="ordered locus">Mext_1082</name>
</gene>